<dbReference type="EC" id="2.3.1.8"/>
<dbReference type="EMBL" id="BA000030">
    <property type="protein sequence ID" value="BAC70534.1"/>
    <property type="molecule type" value="Genomic_DNA"/>
</dbReference>
<dbReference type="RefSeq" id="WP_010984255.1">
    <property type="nucleotide sequence ID" value="NZ_JZJK01000041.1"/>
</dbReference>
<dbReference type="SMR" id="Q82JD2"/>
<dbReference type="GeneID" id="41539910"/>
<dbReference type="KEGG" id="sma:SAVERM_2823"/>
<dbReference type="eggNOG" id="COG0280">
    <property type="taxonomic scope" value="Bacteria"/>
</dbReference>
<dbReference type="eggNOG" id="COG0857">
    <property type="taxonomic scope" value="Bacteria"/>
</dbReference>
<dbReference type="HOGENOM" id="CLU_019723_3_0_11"/>
<dbReference type="OrthoDB" id="9808984at2"/>
<dbReference type="UniPathway" id="UPA00340">
    <property type="reaction ID" value="UER00459"/>
</dbReference>
<dbReference type="Proteomes" id="UP000000428">
    <property type="component" value="Chromosome"/>
</dbReference>
<dbReference type="GO" id="GO:0005737">
    <property type="term" value="C:cytoplasm"/>
    <property type="evidence" value="ECO:0007669"/>
    <property type="project" value="UniProtKB-SubCell"/>
</dbReference>
<dbReference type="GO" id="GO:0008959">
    <property type="term" value="F:phosphate acetyltransferase activity"/>
    <property type="evidence" value="ECO:0007669"/>
    <property type="project" value="UniProtKB-EC"/>
</dbReference>
<dbReference type="GO" id="GO:0006085">
    <property type="term" value="P:acetyl-CoA biosynthetic process"/>
    <property type="evidence" value="ECO:0007669"/>
    <property type="project" value="UniProtKB-UniPathway"/>
</dbReference>
<dbReference type="CDD" id="cd03109">
    <property type="entry name" value="DTBS"/>
    <property type="match status" value="1"/>
</dbReference>
<dbReference type="FunFam" id="3.40.50.10750:FF:000001">
    <property type="entry name" value="Phosphate acetyltransferase"/>
    <property type="match status" value="1"/>
</dbReference>
<dbReference type="Gene3D" id="3.40.50.10950">
    <property type="match status" value="1"/>
</dbReference>
<dbReference type="Gene3D" id="3.40.1390.20">
    <property type="entry name" value="HprK N-terminal domain-like"/>
    <property type="match status" value="1"/>
</dbReference>
<dbReference type="Gene3D" id="3.40.50.10750">
    <property type="entry name" value="Isocitrate/Isopropylmalate dehydrogenase-like"/>
    <property type="match status" value="1"/>
</dbReference>
<dbReference type="Gene3D" id="3.40.50.300">
    <property type="entry name" value="P-loop containing nucleotide triphosphate hydrolases"/>
    <property type="match status" value="1"/>
</dbReference>
<dbReference type="InterPro" id="IPR010766">
    <property type="entry name" value="DRTGG"/>
</dbReference>
<dbReference type="InterPro" id="IPR016475">
    <property type="entry name" value="P-Actrans_bac"/>
</dbReference>
<dbReference type="InterPro" id="IPR027417">
    <property type="entry name" value="P-loop_NTPase"/>
</dbReference>
<dbReference type="InterPro" id="IPR004614">
    <property type="entry name" value="P_AcTrfase"/>
</dbReference>
<dbReference type="InterPro" id="IPR042113">
    <property type="entry name" value="P_AcTrfase_dom1"/>
</dbReference>
<dbReference type="InterPro" id="IPR042112">
    <property type="entry name" value="P_AcTrfase_dom2"/>
</dbReference>
<dbReference type="InterPro" id="IPR050500">
    <property type="entry name" value="Phos_Acetyltrans/Butyryltrans"/>
</dbReference>
<dbReference type="InterPro" id="IPR002505">
    <property type="entry name" value="PTA_PTB"/>
</dbReference>
<dbReference type="InterPro" id="IPR028979">
    <property type="entry name" value="Ser_kin/Pase_Hpr-like_N_sf"/>
</dbReference>
<dbReference type="NCBIfam" id="NF004167">
    <property type="entry name" value="PRK05632.1"/>
    <property type="match status" value="1"/>
</dbReference>
<dbReference type="NCBIfam" id="NF007233">
    <property type="entry name" value="PRK09653.1"/>
    <property type="match status" value="1"/>
</dbReference>
<dbReference type="NCBIfam" id="TIGR00651">
    <property type="entry name" value="pta"/>
    <property type="match status" value="1"/>
</dbReference>
<dbReference type="PANTHER" id="PTHR43356">
    <property type="entry name" value="PHOSPHATE ACETYLTRANSFERASE"/>
    <property type="match status" value="1"/>
</dbReference>
<dbReference type="PANTHER" id="PTHR43356:SF3">
    <property type="entry name" value="PHOSPHATE ACETYLTRANSFERASE"/>
    <property type="match status" value="1"/>
</dbReference>
<dbReference type="Pfam" id="PF13500">
    <property type="entry name" value="AAA_26"/>
    <property type="match status" value="1"/>
</dbReference>
<dbReference type="Pfam" id="PF07085">
    <property type="entry name" value="DRTGG"/>
    <property type="match status" value="1"/>
</dbReference>
<dbReference type="Pfam" id="PF01515">
    <property type="entry name" value="PTA_PTB"/>
    <property type="match status" value="1"/>
</dbReference>
<dbReference type="PIRSF" id="PIRSF006107">
    <property type="entry name" value="PhpActrans_proteobac"/>
    <property type="match status" value="1"/>
</dbReference>
<dbReference type="SUPFAM" id="SSF75138">
    <property type="entry name" value="HprK N-terminal domain-like"/>
    <property type="match status" value="1"/>
</dbReference>
<dbReference type="SUPFAM" id="SSF53659">
    <property type="entry name" value="Isocitrate/Isopropylmalate dehydrogenase-like"/>
    <property type="match status" value="1"/>
</dbReference>
<dbReference type="SUPFAM" id="SSF52540">
    <property type="entry name" value="P-loop containing nucleoside triphosphate hydrolases"/>
    <property type="match status" value="1"/>
</dbReference>
<proteinExistence type="inferred from homology"/>
<protein>
    <recommendedName>
        <fullName>Phosphate acetyltransferase</fullName>
        <ecNumber>2.3.1.8</ecNumber>
    </recommendedName>
    <alternativeName>
        <fullName>Phosphotransacetylase</fullName>
    </alternativeName>
</protein>
<keyword id="KW-0012">Acyltransferase</keyword>
<keyword id="KW-0963">Cytoplasm</keyword>
<keyword id="KW-1185">Reference proteome</keyword>
<keyword id="KW-0808">Transferase</keyword>
<gene>
    <name type="primary">pta</name>
    <name type="ordered locus">SAV_2823</name>
</gene>
<organism>
    <name type="scientific">Streptomyces avermitilis (strain ATCC 31267 / DSM 46492 / JCM 5070 / NBRC 14893 / NCIMB 12804 / NRRL 8165 / MA-4680)</name>
    <dbReference type="NCBI Taxonomy" id="227882"/>
    <lineage>
        <taxon>Bacteria</taxon>
        <taxon>Bacillati</taxon>
        <taxon>Actinomycetota</taxon>
        <taxon>Actinomycetes</taxon>
        <taxon>Kitasatosporales</taxon>
        <taxon>Streptomycetaceae</taxon>
        <taxon>Streptomyces</taxon>
    </lineage>
</organism>
<evidence type="ECO:0000250" key="1"/>
<evidence type="ECO:0000305" key="2"/>
<accession>Q82JD2</accession>
<name>PTA_STRAW</name>
<sequence>MTRSVYVTGIDRGDGRQVVELGVMELLTRQVDRVGVFRPLVHDGPDRLFELLRARYRLAQDPATVYGMDYHEASALQAEQGTDELMSTLVDRFHLVARDYDVVLVLGTDFADTQFPDELALNARLANEFGAAVIPVVGGRGQTAESVRAETRNAYRAYEGLGCDVLAMVVNRVAREDREELAARLDSLLAVPCYVLPDEPALSAPTVAQITHALGGKVLLGDDSGLARDALDFVFGGAMLPNFLNALTPGCLVVTPGDRADLVVGALAAHSAGTPPIAGVLLTLDERPSDEVLTLAARLAPGTPVVSVAGTSFPTAAELFSLEGKLNAATPRKAETALGLFERYVDTGDLLKRVSAPSSDRLTPMMFEHKLLEQARSDKRRVVLPEGTETRVLHAAEVLLRRGVCDLTLLGPVDQIRKKAADLGIDLGGSQLIDPVTSQLRDSFAEKYAQLRAHKGVSVELAYDVVADVNYFGTLMVQEGLADGMVSGSVHSTAATIRPAFEIIKTKPDTKIVSSVFFMCLADKVLVYGDCAVNPDPNAEQLCDIAVQSAATARQFGVEPRIAMLSYSTGTSGSGADVDKVREATELVRLRRDDLKIEGPIQYDAAVEPSVAATKLPGSDVAGQASVLIFPDLNTGNNTYKAVQRSAGAIAVGPVMQGLRKPVNDLSRGALVQDIVNTVAITAIQAQSPHEKATAQ</sequence>
<comment type="function">
    <text evidence="1">Involved in acetate metabolism.</text>
</comment>
<comment type="catalytic activity">
    <reaction>
        <text>acetyl-CoA + phosphate = acetyl phosphate + CoA</text>
        <dbReference type="Rhea" id="RHEA:19521"/>
        <dbReference type="ChEBI" id="CHEBI:22191"/>
        <dbReference type="ChEBI" id="CHEBI:43474"/>
        <dbReference type="ChEBI" id="CHEBI:57287"/>
        <dbReference type="ChEBI" id="CHEBI:57288"/>
        <dbReference type="EC" id="2.3.1.8"/>
    </reaction>
</comment>
<comment type="pathway">
    <text>Metabolic intermediate biosynthesis; acetyl-CoA biosynthesis; acetyl-CoA from acetate: step 2/2.</text>
</comment>
<comment type="subcellular location">
    <subcellularLocation>
        <location evidence="2">Cytoplasm</location>
    </subcellularLocation>
</comment>
<comment type="domain">
    <text evidence="1">The N-terminal region seems to be important for proper quaternary structure. The C-terminal region contains the substrate-binding site (By similarity).</text>
</comment>
<comment type="similarity">
    <text evidence="2">In the N-terminal section; belongs to the CobB/CobQ family.</text>
</comment>
<comment type="similarity">
    <text evidence="2">In the C-terminal section; belongs to the phosphate acetyltransferase and butyryltransferase family.</text>
</comment>
<feature type="chain" id="PRO_0000405552" description="Phosphate acetyltransferase">
    <location>
        <begin position="1"/>
        <end position="696"/>
    </location>
</feature>
<feature type="region of interest" description="Phosphate acetyltransferase">
    <location>
        <begin position="367"/>
        <end position="696"/>
    </location>
</feature>
<reference key="1">
    <citation type="journal article" date="2001" name="Proc. Natl. Acad. Sci. U.S.A.">
        <title>Genome sequence of an industrial microorganism Streptomyces avermitilis: deducing the ability of producing secondary metabolites.</title>
        <authorList>
            <person name="Omura S."/>
            <person name="Ikeda H."/>
            <person name="Ishikawa J."/>
            <person name="Hanamoto A."/>
            <person name="Takahashi C."/>
            <person name="Shinose M."/>
            <person name="Takahashi Y."/>
            <person name="Horikawa H."/>
            <person name="Nakazawa H."/>
            <person name="Osonoe T."/>
            <person name="Kikuchi H."/>
            <person name="Shiba T."/>
            <person name="Sakaki Y."/>
            <person name="Hattori M."/>
        </authorList>
    </citation>
    <scope>NUCLEOTIDE SEQUENCE [LARGE SCALE GENOMIC DNA]</scope>
    <source>
        <strain>ATCC 31267 / DSM 46492 / JCM 5070 / NBRC 14893 / NCIMB 12804 / NRRL 8165 / MA-4680</strain>
    </source>
</reference>
<reference key="2">
    <citation type="journal article" date="2003" name="Nat. Biotechnol.">
        <title>Complete genome sequence and comparative analysis of the industrial microorganism Streptomyces avermitilis.</title>
        <authorList>
            <person name="Ikeda H."/>
            <person name="Ishikawa J."/>
            <person name="Hanamoto A."/>
            <person name="Shinose M."/>
            <person name="Kikuchi H."/>
            <person name="Shiba T."/>
            <person name="Sakaki Y."/>
            <person name="Hattori M."/>
            <person name="Omura S."/>
        </authorList>
    </citation>
    <scope>NUCLEOTIDE SEQUENCE [LARGE SCALE GENOMIC DNA]</scope>
    <source>
        <strain>ATCC 31267 / DSM 46492 / JCM 5070 / NBRC 14893 / NCIMB 12804 / NRRL 8165 / MA-4680</strain>
    </source>
</reference>